<evidence type="ECO:0000250" key="1"/>
<evidence type="ECO:0000255" key="2">
    <source>
        <dbReference type="PROSITE-ProRule" id="PRU10007"/>
    </source>
</evidence>
<evidence type="ECO:0000255" key="3">
    <source>
        <dbReference type="PROSITE-ProRule" id="PRU10008"/>
    </source>
</evidence>
<evidence type="ECO:0000269" key="4">
    <source>
    </source>
</evidence>
<evidence type="ECO:0000305" key="5"/>
<sequence length="458" mass="49421">MAIATIDPTTGITLKTFDAHTPEEVENRIARAEAAFRSLQNTSFEERARWMHKAADILESEADEVARLIATEMGKTLTTAKYEALKSATGMRHFADHAQRYLSPETPVPASEVNASNLHVQFDPLGVVLAVMPWNYPLWQAVRFAAPALMAGNTGLLKHASNVPQCALYLGDLFARGGFPEGAFQTLLVEGKDVIPLVDDARIRAVTLTGSVAAGSAIAEAAGRNIKRSVLELGGMDVFIVMPSADIEKAAAQAVIARLQNSGQSCIAAKRFYVHEDVYDRFEHLFVTGMAEAVAGDPLDESTSFGPLATERGRQDVHELVRDAREKGAAVQCGGEIPEGEGWYYPATVLTGVTEDMRIYREECFGPVACLYKVSSLQEAIALSNDSDFGLSSSVWTNDETEATEAARSIEAGGVFINGLTASFPAVPFGGLKDSGYGRELSAYGIREFVNIKTVWTS</sequence>
<feature type="chain" id="PRO_0000429427" description="Aldehyde dehydrogenase">
    <location>
        <begin position="1"/>
        <end position="458"/>
    </location>
</feature>
<feature type="active site" description="Proton acceptor" evidence="2 3">
    <location>
        <position position="232"/>
    </location>
</feature>
<feature type="active site" description="Nucleophile" evidence="2 3">
    <location>
        <position position="266"/>
    </location>
</feature>
<feature type="binding site" evidence="1">
    <location>
        <begin position="134"/>
        <end position="135"/>
    </location>
    <ligand>
        <name>NADP(+)</name>
        <dbReference type="ChEBI" id="CHEBI:58349"/>
    </ligand>
</feature>
<feature type="binding site" evidence="1">
    <location>
        <begin position="158"/>
        <end position="161"/>
    </location>
    <ligand>
        <name>NADP(+)</name>
        <dbReference type="ChEBI" id="CHEBI:58349"/>
    </ligand>
</feature>
<feature type="binding site" evidence="1">
    <location>
        <begin position="210"/>
        <end position="211"/>
    </location>
    <ligand>
        <name>NADP(+)</name>
        <dbReference type="ChEBI" id="CHEBI:58349"/>
    </ligand>
</feature>
<feature type="binding site" evidence="1">
    <location>
        <position position="233"/>
    </location>
    <ligand>
        <name>NADP(+)</name>
        <dbReference type="ChEBI" id="CHEBI:58349"/>
    </ligand>
</feature>
<feature type="binding site" evidence="1">
    <location>
        <position position="363"/>
    </location>
    <ligand>
        <name>NADP(+)</name>
        <dbReference type="ChEBI" id="CHEBI:58349"/>
    </ligand>
</feature>
<proteinExistence type="evidence at protein level"/>
<gene>
    <name type="primary">aldh</name>
    <name type="synonym">adh</name>
    <name type="ORF">ORF39</name>
</gene>
<geneLocation type="plasmid">
    <name>pAO1</name>
</geneLocation>
<protein>
    <recommendedName>
        <fullName>Aldehyde dehydrogenase</fullName>
        <ecNumber>1.2.1.3</ecNumber>
        <ecNumber>1.2.1.4</ecNumber>
    </recommendedName>
    <alternativeName>
        <fullName>NAD/NADP-dependent aldehyde dehydrogenase</fullName>
    </alternativeName>
</protein>
<keyword id="KW-0119">Carbohydrate metabolism</keyword>
<keyword id="KW-0520">NAD</keyword>
<keyword id="KW-0521">NADP</keyword>
<keyword id="KW-0560">Oxidoreductase</keyword>
<keyword id="KW-0614">Plasmid</keyword>
<name>ALDH_PAENI</name>
<accession>Q8GAK7</accession>
<dbReference type="EC" id="1.2.1.3"/>
<dbReference type="EC" id="1.2.1.4"/>
<dbReference type="EMBL" id="AJ507836">
    <property type="protein sequence ID" value="CAD47897.1"/>
    <property type="molecule type" value="Genomic_DNA"/>
</dbReference>
<dbReference type="RefSeq" id="WP_016359408.1">
    <property type="nucleotide sequence ID" value="NC_021229.1"/>
</dbReference>
<dbReference type="RefSeq" id="YP_007988723.1">
    <property type="nucleotide sequence ID" value="NC_021229.1"/>
</dbReference>
<dbReference type="SMR" id="Q8GAK7"/>
<dbReference type="GeneID" id="84020246"/>
<dbReference type="BioCyc" id="MetaCyc:MONOMER-17149"/>
<dbReference type="SABIO-RK" id="Q8GAK7"/>
<dbReference type="UniPathway" id="UPA00810"/>
<dbReference type="GO" id="GO:0004029">
    <property type="term" value="F:aldehyde dehydrogenase (NAD+) activity"/>
    <property type="evidence" value="ECO:0007669"/>
    <property type="project" value="UniProtKB-EC"/>
</dbReference>
<dbReference type="GO" id="GO:0033721">
    <property type="term" value="F:aldehyde dehydrogenase (NADP+) activity"/>
    <property type="evidence" value="ECO:0007669"/>
    <property type="project" value="UniProtKB-EC"/>
</dbReference>
<dbReference type="GO" id="GO:0004030">
    <property type="term" value="F:aldehyde dehydrogenase [NAD(P)+] activity"/>
    <property type="evidence" value="ECO:0000314"/>
    <property type="project" value="UniProtKB"/>
</dbReference>
<dbReference type="GO" id="GO:0051287">
    <property type="term" value="F:NAD binding"/>
    <property type="evidence" value="ECO:0000314"/>
    <property type="project" value="UniProtKB"/>
</dbReference>
<dbReference type="GO" id="GO:0050661">
    <property type="term" value="F:NADP binding"/>
    <property type="evidence" value="ECO:0000314"/>
    <property type="project" value="UniProtKB"/>
</dbReference>
<dbReference type="GO" id="GO:0042843">
    <property type="term" value="P:D-xylose catabolic process"/>
    <property type="evidence" value="ECO:0000304"/>
    <property type="project" value="UniProtKB"/>
</dbReference>
<dbReference type="CDD" id="cd07100">
    <property type="entry name" value="ALDH_SSADH1_GabD1"/>
    <property type="match status" value="1"/>
</dbReference>
<dbReference type="FunFam" id="3.40.309.10:FF:000010">
    <property type="entry name" value="Gamma-aminobutyraldehyde dehydrogenase"/>
    <property type="match status" value="1"/>
</dbReference>
<dbReference type="FunFam" id="3.40.605.10:FF:000012">
    <property type="entry name" value="NAD-dependent succinate-semialdehyde dehydrogenase"/>
    <property type="match status" value="1"/>
</dbReference>
<dbReference type="Gene3D" id="3.40.605.10">
    <property type="entry name" value="Aldehyde Dehydrogenase, Chain A, domain 1"/>
    <property type="match status" value="1"/>
</dbReference>
<dbReference type="Gene3D" id="3.40.309.10">
    <property type="entry name" value="Aldehyde Dehydrogenase, Chain A, domain 2"/>
    <property type="match status" value="1"/>
</dbReference>
<dbReference type="InterPro" id="IPR016161">
    <property type="entry name" value="Ald_DH/histidinol_DH"/>
</dbReference>
<dbReference type="InterPro" id="IPR016163">
    <property type="entry name" value="Ald_DH_C"/>
</dbReference>
<dbReference type="InterPro" id="IPR016160">
    <property type="entry name" value="Ald_DH_CS_CYS"/>
</dbReference>
<dbReference type="InterPro" id="IPR029510">
    <property type="entry name" value="Ald_DH_CS_GLU"/>
</dbReference>
<dbReference type="InterPro" id="IPR016162">
    <property type="entry name" value="Ald_DH_N"/>
</dbReference>
<dbReference type="InterPro" id="IPR054988">
    <property type="entry name" value="AldDh_AldH"/>
</dbReference>
<dbReference type="InterPro" id="IPR015590">
    <property type="entry name" value="Aldehyde_DH_dom"/>
</dbReference>
<dbReference type="InterPro" id="IPR044148">
    <property type="entry name" value="ALDH_GabD1-like"/>
</dbReference>
<dbReference type="InterPro" id="IPR047110">
    <property type="entry name" value="GABD/Sad-like"/>
</dbReference>
<dbReference type="NCBIfam" id="NF042989">
    <property type="entry name" value="AldDh_AldH_Clos"/>
    <property type="match status" value="1"/>
</dbReference>
<dbReference type="PANTHER" id="PTHR43217">
    <property type="entry name" value="SUCCINATE SEMIALDEHYDE DEHYDROGENASE [NAD(P)+] SAD"/>
    <property type="match status" value="1"/>
</dbReference>
<dbReference type="PANTHER" id="PTHR43217:SF1">
    <property type="entry name" value="SUCCINATE SEMIALDEHYDE DEHYDROGENASE [NAD(P)+] SAD"/>
    <property type="match status" value="1"/>
</dbReference>
<dbReference type="Pfam" id="PF00171">
    <property type="entry name" value="Aldedh"/>
    <property type="match status" value="1"/>
</dbReference>
<dbReference type="SUPFAM" id="SSF53720">
    <property type="entry name" value="ALDH-like"/>
    <property type="match status" value="1"/>
</dbReference>
<dbReference type="PROSITE" id="PS00070">
    <property type="entry name" value="ALDEHYDE_DEHYDR_CYS"/>
    <property type="match status" value="1"/>
</dbReference>
<dbReference type="PROSITE" id="PS00687">
    <property type="entry name" value="ALDEHYDE_DEHYDR_GLU"/>
    <property type="match status" value="1"/>
</dbReference>
<organism>
    <name type="scientific">Paenarthrobacter nicotinovorans</name>
    <name type="common">Arthrobacter nicotinovorans</name>
    <dbReference type="NCBI Taxonomy" id="29320"/>
    <lineage>
        <taxon>Bacteria</taxon>
        <taxon>Bacillati</taxon>
        <taxon>Actinomycetota</taxon>
        <taxon>Actinomycetes</taxon>
        <taxon>Micrococcales</taxon>
        <taxon>Micrococcaceae</taxon>
        <taxon>Paenarthrobacter</taxon>
    </lineage>
</organism>
<reference key="1">
    <citation type="journal article" date="2003" name="J. Bacteriol.">
        <title>Sequence of the 165-kilobase catabolic plasmid pAO1 from Arthrobacter nicotinovorans and identification of a pAO1-dependent nicotine uptake system.</title>
        <authorList>
            <person name="Igloi G.L."/>
            <person name="Brandsch R."/>
        </authorList>
    </citation>
    <scope>NUCLEOTIDE SEQUENCE [GENOMIC DNA]</scope>
    <source>
        <strain>ATCC 49919 / DSM 420 / JCM 3874 / KCTC 9902 / LMG 16253 / NBRC 15511</strain>
        <plasmid>pAO1</plasmid>
    </source>
</reference>
<reference key="2">
    <citation type="journal article" date="2013" name="Res. Microbiol.">
        <title>Evidence of a plasmid-encoded oxidative xylose-catabolic pathway in Arthrobacter nicotinovorans pAO1.</title>
        <authorList>
            <person name="Mihasan M."/>
            <person name="Stefan M."/>
            <person name="Hritcu L."/>
            <person name="Artenie V."/>
            <person name="Brandsch R."/>
        </authorList>
    </citation>
    <scope>FUNCTION</scope>
    <scope>CATALYTIC ACTIVITY</scope>
    <scope>SUBSTRATE SPECIFICITY</scope>
    <scope>KINETIC PARAMETERS</scope>
    <scope>INDUCTION</scope>
    <scope>PATHWAY</scope>
    <scope>SUBUNIT</scope>
    <source>
        <strain>ATCC 49919 / DSM 420 / JCM 3874 / KCTC 9902 / LMG 16253 / NBRC 15511</strain>
        <plasmid>pAO1</plasmid>
    </source>
</reference>
<comment type="function">
    <text evidence="4">Aldehyde dehydrogenase able to oxidize various aldehydes such as formaldehyde, glyceraldehyde, butyraldehyde, glutaraldehyde and benzaldehyde (in vitro). Is likely involved in the oxidative D-xylose degradation pathway, catalyzing the oxidation step of 2-oxoglutarate semialdehyde to 2-oxoglutarate. Is able to use both NAD(+) and NADP(+); however, shows a preference for NADP(+). Does not display succinate semialdehyde dehydrogenase activity.</text>
</comment>
<comment type="catalytic activity">
    <reaction evidence="4">
        <text>an aldehyde + NAD(+) + H2O = a carboxylate + NADH + 2 H(+)</text>
        <dbReference type="Rhea" id="RHEA:16185"/>
        <dbReference type="ChEBI" id="CHEBI:15377"/>
        <dbReference type="ChEBI" id="CHEBI:15378"/>
        <dbReference type="ChEBI" id="CHEBI:17478"/>
        <dbReference type="ChEBI" id="CHEBI:29067"/>
        <dbReference type="ChEBI" id="CHEBI:57540"/>
        <dbReference type="ChEBI" id="CHEBI:57945"/>
        <dbReference type="EC" id="1.2.1.3"/>
    </reaction>
</comment>
<comment type="catalytic activity">
    <reaction evidence="4">
        <text>an aldehyde + NADP(+) + H2O = a carboxylate + NADPH + 2 H(+)</text>
        <dbReference type="Rhea" id="RHEA:11888"/>
        <dbReference type="ChEBI" id="CHEBI:15377"/>
        <dbReference type="ChEBI" id="CHEBI:15378"/>
        <dbReference type="ChEBI" id="CHEBI:17478"/>
        <dbReference type="ChEBI" id="CHEBI:29067"/>
        <dbReference type="ChEBI" id="CHEBI:57783"/>
        <dbReference type="ChEBI" id="CHEBI:58349"/>
        <dbReference type="EC" id="1.2.1.4"/>
    </reaction>
</comment>
<comment type="biophysicochemical properties">
    <kinetics>
        <KM evidence="4">0.022 mM for NADP(+)</KM>
        <KM evidence="4">1.26 mM for NAD(+)</KM>
        <KM evidence="4">4.2 mM for formaldehyde</KM>
        <KM evidence="4">2.5 mM for acetaldehyde</KM>
        <KM evidence="4">1.5 mM for propionaldehyde</KM>
        <KM evidence="4">0.65 mM for glyceraldehyde</KM>
        <KM evidence="4">0.15 mM for butyraldehyde</KM>
        <KM evidence="4">0.11 mM for glutaraldehyde</KM>
        <KM evidence="4">2.1 mM for benzaldehyde</KM>
        <text>kcat is 0.38 sec(-1) with formaldehyde as substrate. kcat is 0.75 sec(-1) with acetaldehyde as substrate. kcat is 1.2 sec(-1) with propionaldehyde as substrate. kcat is 1.35 sec(-1) with glyceraldehyde as substrate. kcat is 0.65 sec(-1) with butyraldehyde as substrate. kcat is 3.92 sec(-1) with glutaraldehyde as substrate. kcat is 4.52 sec(-1) with benzaldehyde as substrate.</text>
    </kinetics>
</comment>
<comment type="pathway">
    <text evidence="4">Carbohydrate metabolism; D-xylose degradation.</text>
</comment>
<comment type="subunit">
    <text evidence="4">Monomer.</text>
</comment>
<comment type="induction">
    <text evidence="4">Is induced by D-xylose. No significant levels of expression can detected when the cells are grown on various other sugars such as L-xylose, L-arabinose, D-galactose, D-tagatose and D-glucose.</text>
</comment>
<comment type="similarity">
    <text evidence="5">Belongs to the aldehyde dehydrogenase family.</text>
</comment>